<name>YNB7_YEAST</name>
<protein>
    <recommendedName>
        <fullName>Putative uncharacterized protein YNL017C</fullName>
    </recommendedName>
</protein>
<proteinExistence type="uncertain"/>
<sequence>MLTSLFVHLPCNGSGKGKQNKSHCEKCKKRMVSSGIEPLIPALLARCLNQLGQETIVICFSPSLHTIKPTSQMCARTTAHYLCATKINLHCHSNFRQTPTEKCSYYFLSRAH</sequence>
<organism>
    <name type="scientific">Saccharomyces cerevisiae (strain ATCC 204508 / S288c)</name>
    <name type="common">Baker's yeast</name>
    <dbReference type="NCBI Taxonomy" id="559292"/>
    <lineage>
        <taxon>Eukaryota</taxon>
        <taxon>Fungi</taxon>
        <taxon>Dikarya</taxon>
        <taxon>Ascomycota</taxon>
        <taxon>Saccharomycotina</taxon>
        <taxon>Saccharomycetes</taxon>
        <taxon>Saccharomycetales</taxon>
        <taxon>Saccharomycetaceae</taxon>
        <taxon>Saccharomyces</taxon>
    </lineage>
</organism>
<dbReference type="EMBL" id="Z71293">
    <property type="protein sequence ID" value="CAA95879.1"/>
    <property type="molecule type" value="Genomic_DNA"/>
</dbReference>
<dbReference type="EMBL" id="Z71292">
    <property type="protein sequence ID" value="CAA95878.1"/>
    <property type="molecule type" value="Genomic_DNA"/>
</dbReference>
<dbReference type="PIR" id="S62929">
    <property type="entry name" value="S62929"/>
</dbReference>
<dbReference type="PaxDb" id="4932-YNL017C"/>
<dbReference type="EnsemblFungi" id="YNL017C_mRNA">
    <property type="protein sequence ID" value="YNL017C"/>
    <property type="gene ID" value="YNL017C"/>
</dbReference>
<dbReference type="AGR" id="SGD:S000004962"/>
<dbReference type="SGD" id="S000004962">
    <property type="gene designation" value="YNL017C"/>
</dbReference>
<dbReference type="HOGENOM" id="CLU_2147834_0_0_1"/>
<reference key="1">
    <citation type="journal article" date="1997" name="Nature">
        <title>The nucleotide sequence of Saccharomyces cerevisiae chromosome XIV and its evolutionary implications.</title>
        <authorList>
            <person name="Philippsen P."/>
            <person name="Kleine K."/>
            <person name="Poehlmann R."/>
            <person name="Duesterhoeft A."/>
            <person name="Hamberg K."/>
            <person name="Hegemann J.H."/>
            <person name="Obermaier B."/>
            <person name="Urrestarazu L.A."/>
            <person name="Aert R."/>
            <person name="Albermann K."/>
            <person name="Altmann R."/>
            <person name="Andre B."/>
            <person name="Baladron V."/>
            <person name="Ballesta J.P.G."/>
            <person name="Becam A.-M."/>
            <person name="Beinhauer J.D."/>
            <person name="Boskovic J."/>
            <person name="Buitrago M.J."/>
            <person name="Bussereau F."/>
            <person name="Coster F."/>
            <person name="Crouzet M."/>
            <person name="D'Angelo M."/>
            <person name="Dal Pero F."/>
            <person name="De Antoni A."/>
            <person name="del Rey F."/>
            <person name="Doignon F."/>
            <person name="Domdey H."/>
            <person name="Dubois E."/>
            <person name="Fiedler T.A."/>
            <person name="Fleig U."/>
            <person name="Floeth M."/>
            <person name="Fritz C."/>
            <person name="Gaillardin C."/>
            <person name="Garcia-Cantalejo J.M."/>
            <person name="Glansdorff N."/>
            <person name="Goffeau A."/>
            <person name="Gueldener U."/>
            <person name="Herbert C.J."/>
            <person name="Heumann K."/>
            <person name="Heuss-Neitzel D."/>
            <person name="Hilbert H."/>
            <person name="Hinni K."/>
            <person name="Iraqui Houssaini I."/>
            <person name="Jacquet M."/>
            <person name="Jimenez A."/>
            <person name="Jonniaux J.-L."/>
            <person name="Karpfinger-Hartl L."/>
            <person name="Lanfranchi G."/>
            <person name="Lepingle A."/>
            <person name="Levesque H."/>
            <person name="Lyck R."/>
            <person name="Maftahi M."/>
            <person name="Mallet L."/>
            <person name="Maurer C.T.C."/>
            <person name="Messenguy F."/>
            <person name="Mewes H.-W."/>
            <person name="Moestl D."/>
            <person name="Nasr F."/>
            <person name="Nicaud J.-M."/>
            <person name="Niedenthal R.K."/>
            <person name="Pandolfo D."/>
            <person name="Pierard A."/>
            <person name="Piravandi E."/>
            <person name="Planta R.J."/>
            <person name="Pohl T.M."/>
            <person name="Purnelle B."/>
            <person name="Rebischung C."/>
            <person name="Remacha M.A."/>
            <person name="Revuelta J.L."/>
            <person name="Rinke M."/>
            <person name="Saiz J.E."/>
            <person name="Sartorello F."/>
            <person name="Scherens B."/>
            <person name="Sen-Gupta M."/>
            <person name="Soler-Mira A."/>
            <person name="Urbanus J.H.M."/>
            <person name="Valle G."/>
            <person name="Van Dyck L."/>
            <person name="Verhasselt P."/>
            <person name="Vierendeels F."/>
            <person name="Vissers S."/>
            <person name="Voet M."/>
            <person name="Volckaert G."/>
            <person name="Wach A."/>
            <person name="Wambutt R."/>
            <person name="Wedler H."/>
            <person name="Zollner A."/>
            <person name="Hani J."/>
        </authorList>
    </citation>
    <scope>NUCLEOTIDE SEQUENCE [LARGE SCALE GENOMIC DNA]</scope>
    <source>
        <strain>ATCC 204508 / S288c</strain>
    </source>
</reference>
<reference key="2">
    <citation type="journal article" date="2014" name="G3 (Bethesda)">
        <title>The reference genome sequence of Saccharomyces cerevisiae: Then and now.</title>
        <authorList>
            <person name="Engel S.R."/>
            <person name="Dietrich F.S."/>
            <person name="Fisk D.G."/>
            <person name="Binkley G."/>
            <person name="Balakrishnan R."/>
            <person name="Costanzo M.C."/>
            <person name="Dwight S.S."/>
            <person name="Hitz B.C."/>
            <person name="Karra K."/>
            <person name="Nash R.S."/>
            <person name="Weng S."/>
            <person name="Wong E.D."/>
            <person name="Lloyd P."/>
            <person name="Skrzypek M.S."/>
            <person name="Miyasato S.R."/>
            <person name="Simison M."/>
            <person name="Cherry J.M."/>
        </authorList>
    </citation>
    <scope>GENOME REANNOTATION</scope>
    <source>
        <strain>ATCC 204508 / S288c</strain>
    </source>
</reference>
<accession>P53977</accession>
<feature type="chain" id="PRO_0000203463" description="Putative uncharacterized protein YNL017C">
    <location>
        <begin position="1"/>
        <end position="112"/>
    </location>
</feature>
<gene>
    <name type="ordered locus">YNL017C</name>
    <name type="ORF">N2834</name>
</gene>
<comment type="miscellaneous">
    <text evidence="1">Completely overlaps the tRNA ORF tI(AAU)N2.</text>
</comment>
<comment type="caution">
    <text evidence="2">Product of a dubious gene prediction unlikely to encode a functional protein. Because of that it is not part of the S.cerevisiae S288c complete/reference proteome set.</text>
</comment>
<evidence type="ECO:0000305" key="1"/>
<evidence type="ECO:0000305" key="2">
    <source>
    </source>
</evidence>